<accession>P59817</accession>
<dbReference type="EMBL" id="D87009">
    <property type="protein sequence ID" value="BAA20006.1"/>
    <property type="molecule type" value="Genomic_DNA"/>
</dbReference>
<dbReference type="EMBL" id="D87011">
    <property type="protein sequence ID" value="BAA20008.1"/>
    <property type="molecule type" value="Genomic_DNA"/>
</dbReference>
<dbReference type="EMBL" id="AC246793">
    <property type="status" value="NOT_ANNOTATED_CDS"/>
    <property type="molecule type" value="Genomic_DNA"/>
</dbReference>
<dbReference type="EMBL" id="BC053901">
    <property type="protein sequence ID" value="AAH53901.1"/>
    <property type="molecule type" value="mRNA"/>
</dbReference>
<dbReference type="CCDS" id="CCDS13800.1"/>
<dbReference type="RefSeq" id="NP_542778.2">
    <property type="nucleotide sequence ID" value="NM_080740.5"/>
</dbReference>
<dbReference type="SMR" id="P59817"/>
<dbReference type="BioGRID" id="126180">
    <property type="interactions" value="15"/>
</dbReference>
<dbReference type="FunCoup" id="P59817">
    <property type="interactions" value="8"/>
</dbReference>
<dbReference type="IntAct" id="P59817">
    <property type="interactions" value="11"/>
</dbReference>
<dbReference type="MINT" id="P59817"/>
<dbReference type="STRING" id="9606.ENSP00000302855"/>
<dbReference type="GlyGen" id="P59817">
    <property type="glycosylation" value="1 site"/>
</dbReference>
<dbReference type="BioMuta" id="ZNF280A"/>
<dbReference type="DMDM" id="313104252"/>
<dbReference type="jPOST" id="P59817"/>
<dbReference type="MassIVE" id="P59817"/>
<dbReference type="PaxDb" id="9606-ENSP00000302855"/>
<dbReference type="PeptideAtlas" id="P59817"/>
<dbReference type="ProteomicsDB" id="57161"/>
<dbReference type="Pumba" id="P59817"/>
<dbReference type="Antibodypedia" id="23629">
    <property type="antibodies" value="172 antibodies from 24 providers"/>
</dbReference>
<dbReference type="DNASU" id="129025"/>
<dbReference type="Ensembl" id="ENST00000302097.3">
    <property type="protein sequence ID" value="ENSP00000302855.3"/>
    <property type="gene ID" value="ENSG00000169548.3"/>
</dbReference>
<dbReference type="Ensembl" id="ENST00000620282.2">
    <property type="protein sequence ID" value="ENSP00000480861.1"/>
    <property type="gene ID" value="ENSG00000275499.2"/>
</dbReference>
<dbReference type="GeneID" id="129025"/>
<dbReference type="KEGG" id="hsa:129025"/>
<dbReference type="MANE-Select" id="ENST00000302097.3">
    <property type="protein sequence ID" value="ENSP00000302855.3"/>
    <property type="RefSeq nucleotide sequence ID" value="NM_080740.5"/>
    <property type="RefSeq protein sequence ID" value="NP_542778.2"/>
</dbReference>
<dbReference type="UCSC" id="uc032qhw.1">
    <property type="organism name" value="human"/>
</dbReference>
<dbReference type="AGR" id="HGNC:18597"/>
<dbReference type="CTD" id="129025"/>
<dbReference type="DisGeNET" id="129025"/>
<dbReference type="GeneCards" id="ZNF280A"/>
<dbReference type="HGNC" id="HGNC:18597">
    <property type="gene designation" value="ZNF280A"/>
</dbReference>
<dbReference type="HPA" id="ENSG00000169548">
    <property type="expression patterns" value="Tissue enriched (adrenal)"/>
</dbReference>
<dbReference type="neXtProt" id="NX_P59817"/>
<dbReference type="OpenTargets" id="ENSG00000169548"/>
<dbReference type="PharmGKB" id="PA38358"/>
<dbReference type="VEuPathDB" id="HostDB:ENSG00000169548"/>
<dbReference type="eggNOG" id="KOG1721">
    <property type="taxonomic scope" value="Eukaryota"/>
</dbReference>
<dbReference type="GeneTree" id="ENSGT00940000165289"/>
<dbReference type="HOGENOM" id="CLU_010097_3_2_1"/>
<dbReference type="InParanoid" id="P59817"/>
<dbReference type="OMA" id="VHIAMGP"/>
<dbReference type="OrthoDB" id="10032537at2759"/>
<dbReference type="PAN-GO" id="P59817">
    <property type="GO annotations" value="3 GO annotations based on evolutionary models"/>
</dbReference>
<dbReference type="PhylomeDB" id="P59817"/>
<dbReference type="TreeFam" id="TF331707"/>
<dbReference type="PathwayCommons" id="P59817"/>
<dbReference type="SignaLink" id="P59817"/>
<dbReference type="BioGRID-ORCS" id="129025">
    <property type="hits" value="19 hits in 1161 CRISPR screens"/>
</dbReference>
<dbReference type="ChiTaRS" id="ZNF280A">
    <property type="organism name" value="human"/>
</dbReference>
<dbReference type="GenomeRNAi" id="129025"/>
<dbReference type="Pharos" id="P59817">
    <property type="development level" value="Tdark"/>
</dbReference>
<dbReference type="PRO" id="PR:P59817"/>
<dbReference type="Proteomes" id="UP000005640">
    <property type="component" value="Chromosome 22"/>
</dbReference>
<dbReference type="RNAct" id="P59817">
    <property type="molecule type" value="protein"/>
</dbReference>
<dbReference type="Bgee" id="ENSG00000169548">
    <property type="expression patterns" value="Expressed in male germ line stem cell (sensu Vertebrata) in testis and 5 other cell types or tissues"/>
</dbReference>
<dbReference type="GO" id="GO:0005634">
    <property type="term" value="C:nucleus"/>
    <property type="evidence" value="ECO:0007669"/>
    <property type="project" value="UniProtKB-SubCell"/>
</dbReference>
<dbReference type="GO" id="GO:0000981">
    <property type="term" value="F:DNA-binding transcription factor activity, RNA polymerase II-specific"/>
    <property type="evidence" value="ECO:0000318"/>
    <property type="project" value="GO_Central"/>
</dbReference>
<dbReference type="GO" id="GO:0000978">
    <property type="term" value="F:RNA polymerase II cis-regulatory region sequence-specific DNA binding"/>
    <property type="evidence" value="ECO:0000318"/>
    <property type="project" value="GO_Central"/>
</dbReference>
<dbReference type="GO" id="GO:0008270">
    <property type="term" value="F:zinc ion binding"/>
    <property type="evidence" value="ECO:0007669"/>
    <property type="project" value="UniProtKB-KW"/>
</dbReference>
<dbReference type="GO" id="GO:0006355">
    <property type="term" value="P:regulation of DNA-templated transcription"/>
    <property type="evidence" value="ECO:0000318"/>
    <property type="project" value="GO_Central"/>
</dbReference>
<dbReference type="FunFam" id="3.30.160.60:FF:000298">
    <property type="entry name" value="zinc finger protein 280D isoform X1"/>
    <property type="match status" value="1"/>
</dbReference>
<dbReference type="Gene3D" id="3.30.160.60">
    <property type="entry name" value="Classic Zinc Finger"/>
    <property type="match status" value="1"/>
</dbReference>
<dbReference type="InterPro" id="IPR025243">
    <property type="entry name" value="DUF4195"/>
</dbReference>
<dbReference type="InterPro" id="IPR050527">
    <property type="entry name" value="Snail/Krueppel_Znf"/>
</dbReference>
<dbReference type="InterPro" id="IPR036236">
    <property type="entry name" value="Znf_C2H2_sf"/>
</dbReference>
<dbReference type="InterPro" id="IPR013087">
    <property type="entry name" value="Znf_C2H2_type"/>
</dbReference>
<dbReference type="PANTHER" id="PTHR24388">
    <property type="entry name" value="ZINC FINGER PROTEIN"/>
    <property type="match status" value="1"/>
</dbReference>
<dbReference type="PANTHER" id="PTHR24388:SF47">
    <property type="entry name" value="ZINC FINGER PROTEIN 280A"/>
    <property type="match status" value="1"/>
</dbReference>
<dbReference type="Pfam" id="PF13836">
    <property type="entry name" value="DUF4195"/>
    <property type="match status" value="1"/>
</dbReference>
<dbReference type="SMART" id="SM00355">
    <property type="entry name" value="ZnF_C2H2"/>
    <property type="match status" value="6"/>
</dbReference>
<dbReference type="SUPFAM" id="SSF57667">
    <property type="entry name" value="beta-beta-alpha zinc fingers"/>
    <property type="match status" value="1"/>
</dbReference>
<dbReference type="PROSITE" id="PS00028">
    <property type="entry name" value="ZINC_FINGER_C2H2_1"/>
    <property type="match status" value="4"/>
</dbReference>
<dbReference type="PROSITE" id="PS50157">
    <property type="entry name" value="ZINC_FINGER_C2H2_2"/>
    <property type="match status" value="1"/>
</dbReference>
<organism>
    <name type="scientific">Homo sapiens</name>
    <name type="common">Human</name>
    <dbReference type="NCBI Taxonomy" id="9606"/>
    <lineage>
        <taxon>Eukaryota</taxon>
        <taxon>Metazoa</taxon>
        <taxon>Chordata</taxon>
        <taxon>Craniata</taxon>
        <taxon>Vertebrata</taxon>
        <taxon>Euteleostomi</taxon>
        <taxon>Mammalia</taxon>
        <taxon>Eutheria</taxon>
        <taxon>Euarchontoglires</taxon>
        <taxon>Primates</taxon>
        <taxon>Haplorrhini</taxon>
        <taxon>Catarrhini</taxon>
        <taxon>Hominidae</taxon>
        <taxon>Homo</taxon>
    </lineage>
</organism>
<protein>
    <recommendedName>
        <fullName>Zinc finger protein 280A</fullName>
    </recommendedName>
    <alternativeName>
        <fullName>3'OY11.1</fullName>
    </alternativeName>
    <alternativeName>
        <fullName>Suppressor of hairy wing homolog 1</fullName>
    </alternativeName>
    <alternativeName>
        <fullName>Zinc finger protein 636</fullName>
    </alternativeName>
</protein>
<evidence type="ECO:0000255" key="1">
    <source>
        <dbReference type="PROSITE-ProRule" id="PRU00042"/>
    </source>
</evidence>
<evidence type="ECO:0000256" key="2">
    <source>
        <dbReference type="SAM" id="MobiDB-lite"/>
    </source>
</evidence>
<evidence type="ECO:0000269" key="3">
    <source>
    </source>
</evidence>
<evidence type="ECO:0000305" key="4"/>
<feature type="chain" id="PRO_0000047055" description="Zinc finger protein 280A">
    <location>
        <begin position="1"/>
        <end position="542"/>
    </location>
</feature>
<feature type="zinc finger region" description="C2H2-type 1" evidence="1">
    <location>
        <begin position="334"/>
        <end position="357"/>
    </location>
</feature>
<feature type="zinc finger region" description="C2H2-type 2" evidence="1">
    <location>
        <begin position="364"/>
        <end position="387"/>
    </location>
</feature>
<feature type="zinc finger region" description="C2H2-type 3" evidence="1">
    <location>
        <begin position="423"/>
        <end position="445"/>
    </location>
</feature>
<feature type="zinc finger region" description="C2H2-type 4" evidence="1">
    <location>
        <begin position="451"/>
        <end position="474"/>
    </location>
</feature>
<feature type="region of interest" description="Disordered" evidence="2">
    <location>
        <begin position="66"/>
        <end position="185"/>
    </location>
</feature>
<feature type="region of interest" description="Disordered" evidence="2">
    <location>
        <begin position="499"/>
        <end position="542"/>
    </location>
</feature>
<feature type="compositionally biased region" description="Polar residues" evidence="2">
    <location>
        <begin position="107"/>
        <end position="122"/>
    </location>
</feature>
<feature type="compositionally biased region" description="Low complexity" evidence="2">
    <location>
        <begin position="128"/>
        <end position="143"/>
    </location>
</feature>
<feature type="compositionally biased region" description="Basic and acidic residues" evidence="2">
    <location>
        <begin position="161"/>
        <end position="185"/>
    </location>
</feature>
<feature type="compositionally biased region" description="Polar residues" evidence="2">
    <location>
        <begin position="499"/>
        <end position="520"/>
    </location>
</feature>
<feature type="sequence variant" id="VAR_028218" description="In dbSNP:rs361959." evidence="3">
    <original>N</original>
    <variation>K</variation>
    <location>
        <position position="71"/>
    </location>
</feature>
<feature type="sequence variant" id="VAR_028219" description="In dbSNP:rs362011." evidence="3">
    <original>S</original>
    <variation>N</variation>
    <location>
        <position position="136"/>
    </location>
</feature>
<feature type="sequence variant" id="VAR_028220" description="In dbSNP:rs361580." evidence="3">
    <original>S</original>
    <variation>Y</variation>
    <location>
        <position position="137"/>
    </location>
</feature>
<feature type="sequence variant" id="VAR_028221" description="In dbSNP:rs362132." evidence="3">
    <original>S</original>
    <variation>N</variation>
    <location>
        <position position="246"/>
    </location>
</feature>
<feature type="sequence variant" id="VAR_028222" description="In dbSNP:rs362124." evidence="3">
    <original>A</original>
    <variation>G</variation>
    <location>
        <position position="249"/>
    </location>
</feature>
<feature type="sequence variant" id="VAR_028223" description="In dbSNP:rs16989015.">
    <original>L</original>
    <variation>F</variation>
    <location>
        <position position="276"/>
    </location>
</feature>
<feature type="sequence variant" id="VAR_028224" description="In dbSNP:rs362003." evidence="3">
    <original>D</original>
    <variation>N</variation>
    <location>
        <position position="278"/>
    </location>
</feature>
<feature type="sequence variant" id="VAR_028225" description="In dbSNP:rs361762." evidence="3">
    <original>L</original>
    <variation>F</variation>
    <location>
        <position position="486"/>
    </location>
</feature>
<feature type="sequence variant" id="VAR_028226" description="In dbSNP:rs361666." evidence="3">
    <original>S</original>
    <variation>R</variation>
    <location>
        <position position="488"/>
    </location>
</feature>
<keyword id="KW-0238">DNA-binding</keyword>
<keyword id="KW-0479">Metal-binding</keyword>
<keyword id="KW-0539">Nucleus</keyword>
<keyword id="KW-1267">Proteomics identification</keyword>
<keyword id="KW-1185">Reference proteome</keyword>
<keyword id="KW-0677">Repeat</keyword>
<keyword id="KW-0804">Transcription</keyword>
<keyword id="KW-0805">Transcription regulation</keyword>
<keyword id="KW-0862">Zinc</keyword>
<keyword id="KW-0863">Zinc-finger</keyword>
<proteinExistence type="evidence at protein level"/>
<comment type="function">
    <text>May function as a transcription factor.</text>
</comment>
<comment type="interaction">
    <interactant intactId="EBI-8489342">
        <id>P59817</id>
    </interactant>
    <interactant intactId="EBI-10311131">
        <id>Q9NP86</id>
        <label>CABP5</label>
    </interactant>
    <organismsDiffer>false</organismsDiffer>
    <experiments>3</experiments>
</comment>
<comment type="interaction">
    <interactant intactId="EBI-8489342">
        <id>P59817</id>
    </interactant>
    <interactant intactId="EBI-750700">
        <id>Q8N9N8</id>
        <label>EIF1AD</label>
    </interactant>
    <organismsDiffer>false</organismsDiffer>
    <experiments>3</experiments>
</comment>
<comment type="interaction">
    <interactant intactId="EBI-8489342">
        <id>P59817</id>
    </interactant>
    <interactant intactId="EBI-726969">
        <id>Q9UHY7</id>
        <label>ENOPH1</label>
    </interactant>
    <organismsDiffer>false</organismsDiffer>
    <experiments>5</experiments>
</comment>
<comment type="interaction">
    <interactant intactId="EBI-8489342">
        <id>P59817</id>
    </interactant>
    <interactant intactId="EBI-12169289">
        <id>Q08493-2</id>
        <label>PDE4C</label>
    </interactant>
    <organismsDiffer>false</organismsDiffer>
    <experiments>3</experiments>
</comment>
<comment type="subcellular location">
    <subcellularLocation>
        <location evidence="4">Nucleus</location>
    </subcellularLocation>
</comment>
<name>Z280A_HUMAN</name>
<reference key="1">
    <citation type="journal article" date="1997" name="Genome Res.">
        <title>One-megabase sequence analysis of the human immunoglobulin lambda gene locus.</title>
        <authorList>
            <person name="Kawasaki K."/>
            <person name="Minoshima S."/>
            <person name="Nakato E."/>
            <person name="Shibuya K."/>
            <person name="Shintani A."/>
            <person name="Schmeits J.L."/>
            <person name="Wang J."/>
            <person name="Shimizu N."/>
        </authorList>
    </citation>
    <scope>NUCLEOTIDE SEQUENCE [GENOMIC DNA]</scope>
    <scope>VARIANTS LYS-71; ASN-136; TYR-137; ASN-246; GLY-249; ASN-278; PHE-486 AND ARG-488</scope>
</reference>
<reference key="2">
    <citation type="journal article" date="1999" name="Nature">
        <title>The DNA sequence of human chromosome 22.</title>
        <authorList>
            <person name="Dunham I."/>
            <person name="Hunt A.R."/>
            <person name="Collins J.E."/>
            <person name="Bruskiewich R."/>
            <person name="Beare D.M."/>
            <person name="Clamp M."/>
            <person name="Smink L.J."/>
            <person name="Ainscough R."/>
            <person name="Almeida J.P."/>
            <person name="Babbage A.K."/>
            <person name="Bagguley C."/>
            <person name="Bailey J."/>
            <person name="Barlow K.F."/>
            <person name="Bates K.N."/>
            <person name="Beasley O.P."/>
            <person name="Bird C.P."/>
            <person name="Blakey S.E."/>
            <person name="Bridgeman A.M."/>
            <person name="Buck D."/>
            <person name="Burgess J."/>
            <person name="Burrill W.D."/>
            <person name="Burton J."/>
            <person name="Carder C."/>
            <person name="Carter N.P."/>
            <person name="Chen Y."/>
            <person name="Clark G."/>
            <person name="Clegg S.M."/>
            <person name="Cobley V.E."/>
            <person name="Cole C.G."/>
            <person name="Collier R.E."/>
            <person name="Connor R."/>
            <person name="Conroy D."/>
            <person name="Corby N.R."/>
            <person name="Coville G.J."/>
            <person name="Cox A.V."/>
            <person name="Davis J."/>
            <person name="Dawson E."/>
            <person name="Dhami P.D."/>
            <person name="Dockree C."/>
            <person name="Dodsworth S.J."/>
            <person name="Durbin R.M."/>
            <person name="Ellington A.G."/>
            <person name="Evans K.L."/>
            <person name="Fey J.M."/>
            <person name="Fleming K."/>
            <person name="French L."/>
            <person name="Garner A.A."/>
            <person name="Gilbert J.G.R."/>
            <person name="Goward M.E."/>
            <person name="Grafham D.V."/>
            <person name="Griffiths M.N.D."/>
            <person name="Hall C."/>
            <person name="Hall R.E."/>
            <person name="Hall-Tamlyn G."/>
            <person name="Heathcott R.W."/>
            <person name="Ho S."/>
            <person name="Holmes S."/>
            <person name="Hunt S.E."/>
            <person name="Jones M.C."/>
            <person name="Kershaw J."/>
            <person name="Kimberley A.M."/>
            <person name="King A."/>
            <person name="Laird G.K."/>
            <person name="Langford C.F."/>
            <person name="Leversha M.A."/>
            <person name="Lloyd C."/>
            <person name="Lloyd D.M."/>
            <person name="Martyn I.D."/>
            <person name="Mashreghi-Mohammadi M."/>
            <person name="Matthews L.H."/>
            <person name="Mccann O.T."/>
            <person name="Mcclay J."/>
            <person name="Mclaren S."/>
            <person name="McMurray A.A."/>
            <person name="Milne S.A."/>
            <person name="Mortimore B.J."/>
            <person name="Odell C.N."/>
            <person name="Pavitt R."/>
            <person name="Pearce A.V."/>
            <person name="Pearson D."/>
            <person name="Phillimore B.J.C.T."/>
            <person name="Phillips S.H."/>
            <person name="Plumb R.W."/>
            <person name="Ramsay H."/>
            <person name="Ramsey Y."/>
            <person name="Rogers L."/>
            <person name="Ross M.T."/>
            <person name="Scott C.E."/>
            <person name="Sehra H.K."/>
            <person name="Skuce C.D."/>
            <person name="Smalley S."/>
            <person name="Smith M.L."/>
            <person name="Soderlund C."/>
            <person name="Spragon L."/>
            <person name="Steward C.A."/>
            <person name="Sulston J.E."/>
            <person name="Swann R.M."/>
            <person name="Vaudin M."/>
            <person name="Wall M."/>
            <person name="Wallis J.M."/>
            <person name="Whiteley M.N."/>
            <person name="Willey D.L."/>
            <person name="Williams L."/>
            <person name="Williams S.A."/>
            <person name="Williamson H."/>
            <person name="Wilmer T.E."/>
            <person name="Wilming L."/>
            <person name="Wright C.L."/>
            <person name="Hubbard T."/>
            <person name="Bentley D.R."/>
            <person name="Beck S."/>
            <person name="Rogers J."/>
            <person name="Shimizu N."/>
            <person name="Minoshima S."/>
            <person name="Kawasaki K."/>
            <person name="Sasaki T."/>
            <person name="Asakawa S."/>
            <person name="Kudoh J."/>
            <person name="Shintani A."/>
            <person name="Shibuya K."/>
            <person name="Yoshizaki Y."/>
            <person name="Aoki N."/>
            <person name="Mitsuyama S."/>
            <person name="Roe B.A."/>
            <person name="Chen F."/>
            <person name="Chu L."/>
            <person name="Crabtree J."/>
            <person name="Deschamps S."/>
            <person name="Do A."/>
            <person name="Do T."/>
            <person name="Dorman A."/>
            <person name="Fang F."/>
            <person name="Fu Y."/>
            <person name="Hu P."/>
            <person name="Hua A."/>
            <person name="Kenton S."/>
            <person name="Lai H."/>
            <person name="Lao H.I."/>
            <person name="Lewis J."/>
            <person name="Lewis S."/>
            <person name="Lin S.-P."/>
            <person name="Loh P."/>
            <person name="Malaj E."/>
            <person name="Nguyen T."/>
            <person name="Pan H."/>
            <person name="Phan S."/>
            <person name="Qi S."/>
            <person name="Qian Y."/>
            <person name="Ray L."/>
            <person name="Ren Q."/>
            <person name="Shaull S."/>
            <person name="Sloan D."/>
            <person name="Song L."/>
            <person name="Wang Q."/>
            <person name="Wang Y."/>
            <person name="Wang Z."/>
            <person name="White J."/>
            <person name="Willingham D."/>
            <person name="Wu H."/>
            <person name="Yao Z."/>
            <person name="Zhan M."/>
            <person name="Zhang G."/>
            <person name="Chissoe S."/>
            <person name="Murray J."/>
            <person name="Miller N."/>
            <person name="Minx P."/>
            <person name="Fulton R."/>
            <person name="Johnson D."/>
            <person name="Bemis G."/>
            <person name="Bentley D."/>
            <person name="Bradshaw H."/>
            <person name="Bourne S."/>
            <person name="Cordes M."/>
            <person name="Du Z."/>
            <person name="Fulton L."/>
            <person name="Goela D."/>
            <person name="Graves T."/>
            <person name="Hawkins J."/>
            <person name="Hinds K."/>
            <person name="Kemp K."/>
            <person name="Latreille P."/>
            <person name="Layman D."/>
            <person name="Ozersky P."/>
            <person name="Rohlfing T."/>
            <person name="Scheet P."/>
            <person name="Walker C."/>
            <person name="Wamsley A."/>
            <person name="Wohldmann P."/>
            <person name="Pepin K."/>
            <person name="Nelson J."/>
            <person name="Korf I."/>
            <person name="Bedell J.A."/>
            <person name="Hillier L.W."/>
            <person name="Mardis E."/>
            <person name="Waterston R."/>
            <person name="Wilson R."/>
            <person name="Emanuel B.S."/>
            <person name="Shaikh T."/>
            <person name="Kurahashi H."/>
            <person name="Saitta S."/>
            <person name="Budarf M.L."/>
            <person name="McDermid H.E."/>
            <person name="Johnson A."/>
            <person name="Wong A.C.C."/>
            <person name="Morrow B.E."/>
            <person name="Edelmann L."/>
            <person name="Kim U.J."/>
            <person name="Shizuya H."/>
            <person name="Simon M.I."/>
            <person name="Dumanski J.P."/>
            <person name="Peyrard M."/>
            <person name="Kedra D."/>
            <person name="Seroussi E."/>
            <person name="Fransson I."/>
            <person name="Tapia I."/>
            <person name="Bruder C.E."/>
            <person name="O'Brien K.P."/>
            <person name="Wilkinson P."/>
            <person name="Bodenteich A."/>
            <person name="Hartman K."/>
            <person name="Hu X."/>
            <person name="Khan A.S."/>
            <person name="Lane L."/>
            <person name="Tilahun Y."/>
            <person name="Wright H."/>
        </authorList>
    </citation>
    <scope>NUCLEOTIDE SEQUENCE [LARGE SCALE GENOMIC DNA]</scope>
</reference>
<reference key="3">
    <citation type="journal article" date="2004" name="Genome Res.">
        <title>The status, quality, and expansion of the NIH full-length cDNA project: the Mammalian Gene Collection (MGC).</title>
        <authorList>
            <consortium name="The MGC Project Team"/>
        </authorList>
    </citation>
    <scope>NUCLEOTIDE SEQUENCE [LARGE SCALE MRNA]</scope>
    <source>
        <tissue>Melanoma</tissue>
    </source>
</reference>
<sequence>MGDIFLCKKVESPKKNLRESKQREEDDEDPDLIYVGVEHVHRDAEVLFVGMISNSKPVVSNILNRVTPGSNSRRKKGHFRQYPAHVSQPANHVTSMAKAIMPVSLSEGRSTDSPVTMKSSSEPGYKMSSPQVVSPSSSDSLPPGTQCLVGAMVSGGGRNESSPDSKRLSTSDINSRDSKRVKLRDGIPGVPSLAVVPSDMSSTISTNTPSQGICNSSNHVQNGVTFPWPDANGKAHFNLTDPERASESALAMTDISSLASQNKTFDPKKENPIVLLSDFYYGQHKGDGQPEQKTHTTFKCLSCVKVLKNIKFMNHMKHHLEFEKQRNDSWEDHTTCQHCHRQFPTPFQLQCHIDSVHIAMGPSAVCKICELSFETDQVLLQHMKDHHKPGEMPYVCQVCHYRSSVFADVETHFRTCHENTKNLLCLFCLKLFKTAIPYMNHCWRHSRRRVLQCSKCRLQFLTLKEEIEHKTKDHQTFKKPEQLQGLPSETKVIIQTSVQPGSSGMASVIVSNTDPQSSPVKTKKKTAMNTRDSRLPCSKDSS</sequence>
<gene>
    <name type="primary">ZNF280A</name>
    <name type="synonym">SUHW1</name>
    <name type="synonym">ZNF280</name>
    <name type="synonym">ZNF636</name>
</gene>